<sequence length="560" mass="64841">MTTSWSDRLQNAADMPANMDKHALKKYRREAYHRVFVNRSLAMEKIKCFGFDMDYTLAVYKSPEYESLGFELTVERLVSIGYPQELLSFAYDSTFPTRGLVFDTLYGNLLKVDAYGNLLVCAHGFNFIRGPETREQYPNKFIQRDDTERFYILNTLFNLPETYLLACLVDFFTNCPRYTSCETGFKDGDLFMSYRSMFQDVRDAVDWVHYKGSLKEKTVENLEKYVVKDGKLPLLLSRMKEVGKVFLATNSDYKYTDKIMTYLFDFPHGPKPGSSHRPWQSYFDLILVDARKPLFFGEGTVLRQVDTKTGKLKIGTYTGPLQHGIVYSGGSSDTVCDLLGAKGKDILYIGDHIFGDILKSKKRQGWRTFLVIPELAQELHVWTDKSSLFEELQSLDIFLAELYKHLDSSSNERPDISSIQRRIKKVTHDMDMCYGMMGSLFRSGSRQTLFASQVMRYADLYAASFINLLYYPFSYLFRAAHVLMPHESTVEHTHVDINEMESPLATRNRTSVDFKDTDYKRHQLTRSISEIKPPNLFPLAPQEITHCHDEDDDEEEEEEE</sequence>
<keyword id="KW-0021">Allosteric enzyme</keyword>
<keyword id="KW-0067">ATP-binding</keyword>
<keyword id="KW-0963">Cytoplasm</keyword>
<keyword id="KW-0378">Hydrolase</keyword>
<keyword id="KW-0460">Magnesium</keyword>
<keyword id="KW-0479">Metal-binding</keyword>
<keyword id="KW-0546">Nucleotide metabolism</keyword>
<keyword id="KW-0547">Nucleotide-binding</keyword>
<keyword id="KW-0597">Phosphoprotein</keyword>
<keyword id="KW-1185">Reference proteome</keyword>
<keyword id="KW-0808">Transferase</keyword>
<gene>
    <name evidence="2" type="primary">NT5C2</name>
</gene>
<organism>
    <name type="scientific">Bos taurus</name>
    <name type="common">Bovine</name>
    <dbReference type="NCBI Taxonomy" id="9913"/>
    <lineage>
        <taxon>Eukaryota</taxon>
        <taxon>Metazoa</taxon>
        <taxon>Chordata</taxon>
        <taxon>Craniata</taxon>
        <taxon>Vertebrata</taxon>
        <taxon>Euteleostomi</taxon>
        <taxon>Mammalia</taxon>
        <taxon>Eutheria</taxon>
        <taxon>Laurasiatheria</taxon>
        <taxon>Artiodactyla</taxon>
        <taxon>Ruminantia</taxon>
        <taxon>Pecora</taxon>
        <taxon>Bovidae</taxon>
        <taxon>Bovinae</taxon>
        <taxon>Bos</taxon>
    </lineage>
</organism>
<name>5NTC_BOVIN</name>
<protein>
    <recommendedName>
        <fullName evidence="9">Cytosolic purine 5'-nucleotidase</fullName>
        <ecNumber evidence="5 6">3.1.3.5</ecNumber>
        <ecNumber evidence="5 6">3.1.3.99</ecNumber>
    </recommendedName>
    <alternativeName>
        <fullName evidence="7">Cytosolic IMP/GMP-specific 5'-nucleotidase</fullName>
    </alternativeName>
    <alternativeName>
        <fullName evidence="9">Cytosolic nucleoside phosphotransferase 5'N</fullName>
        <ecNumber evidence="5 6">2.7.1.77</ecNumber>
    </alternativeName>
</protein>
<accession>O46411</accession>
<proteinExistence type="evidence at protein level"/>
<evidence type="ECO:0000250" key="1">
    <source>
        <dbReference type="UniProtKB" id="D3ZMY7"/>
    </source>
</evidence>
<evidence type="ECO:0000250" key="2">
    <source>
        <dbReference type="UniProtKB" id="P49902"/>
    </source>
</evidence>
<evidence type="ECO:0000250" key="3">
    <source>
        <dbReference type="UniProtKB" id="Q3V1L4"/>
    </source>
</evidence>
<evidence type="ECO:0000256" key="4">
    <source>
        <dbReference type="SAM" id="MobiDB-lite"/>
    </source>
</evidence>
<evidence type="ECO:0000269" key="5">
    <source>
    </source>
</evidence>
<evidence type="ECO:0000269" key="6">
    <source>
    </source>
</evidence>
<evidence type="ECO:0000303" key="7">
    <source>
    </source>
</evidence>
<evidence type="ECO:0000305" key="8"/>
<evidence type="ECO:0000305" key="9">
    <source>
    </source>
</evidence>
<dbReference type="EC" id="3.1.3.5" evidence="5 6"/>
<dbReference type="EC" id="3.1.3.99" evidence="5 6"/>
<dbReference type="EC" id="2.7.1.77" evidence="5 6"/>
<dbReference type="EMBL" id="U73690">
    <property type="protein sequence ID" value="AAC48784.1"/>
    <property type="molecule type" value="mRNA"/>
</dbReference>
<dbReference type="RefSeq" id="NP_776830.1">
    <property type="nucleotide sequence ID" value="NM_174405.2"/>
</dbReference>
<dbReference type="RefSeq" id="XP_005225491.1">
    <property type="nucleotide sequence ID" value="XM_005225434.5"/>
</dbReference>
<dbReference type="SMR" id="O46411"/>
<dbReference type="FunCoup" id="O46411">
    <property type="interactions" value="2504"/>
</dbReference>
<dbReference type="MINT" id="O46411"/>
<dbReference type="STRING" id="9913.ENSBTAP00000017090"/>
<dbReference type="PaxDb" id="9913-ENSBTAP00000017090"/>
<dbReference type="PeptideAtlas" id="O46411"/>
<dbReference type="GeneID" id="281951"/>
<dbReference type="KEGG" id="bta:281951"/>
<dbReference type="CTD" id="22978"/>
<dbReference type="VEuPathDB" id="HostDB:ENSBTAG00000012858"/>
<dbReference type="eggNOG" id="KOG2469">
    <property type="taxonomic scope" value="Eukaryota"/>
</dbReference>
<dbReference type="HOGENOM" id="CLU_017845_3_0_1"/>
<dbReference type="InParanoid" id="O46411"/>
<dbReference type="OrthoDB" id="10252832at2759"/>
<dbReference type="TreeFam" id="TF315266"/>
<dbReference type="BRENDA" id="3.1.3.5">
    <property type="organism ID" value="908"/>
</dbReference>
<dbReference type="Reactome" id="R-BTA-2161541">
    <property type="pathway name" value="Abacavir metabolism"/>
</dbReference>
<dbReference type="Reactome" id="R-BTA-74259">
    <property type="pathway name" value="Purine catabolism"/>
</dbReference>
<dbReference type="Reactome" id="R-BTA-9755088">
    <property type="pathway name" value="Ribavirin ADME"/>
</dbReference>
<dbReference type="Proteomes" id="UP000009136">
    <property type="component" value="Chromosome 26"/>
</dbReference>
<dbReference type="Bgee" id="ENSBTAG00000012858">
    <property type="expression patterns" value="Expressed in thyroid gland and 107 other cell types or tissues"/>
</dbReference>
<dbReference type="GO" id="GO:0005829">
    <property type="term" value="C:cytosol"/>
    <property type="evidence" value="ECO:0000314"/>
    <property type="project" value="UniProtKB"/>
</dbReference>
<dbReference type="GO" id="GO:0008253">
    <property type="term" value="F:5'-nucleotidase activity"/>
    <property type="evidence" value="ECO:0000314"/>
    <property type="project" value="MGI"/>
</dbReference>
<dbReference type="GO" id="GO:0005524">
    <property type="term" value="F:ATP binding"/>
    <property type="evidence" value="ECO:0000250"/>
    <property type="project" value="UniProtKB"/>
</dbReference>
<dbReference type="GO" id="GO:0050484">
    <property type="term" value="F:GMP 5'-nucleotidase activity"/>
    <property type="evidence" value="ECO:0000314"/>
    <property type="project" value="MGI"/>
</dbReference>
<dbReference type="GO" id="GO:0042802">
    <property type="term" value="F:identical protein binding"/>
    <property type="evidence" value="ECO:0000353"/>
    <property type="project" value="IntAct"/>
</dbReference>
<dbReference type="GO" id="GO:0050483">
    <property type="term" value="F:IMP 5'-nucleotidase activity"/>
    <property type="evidence" value="ECO:0000314"/>
    <property type="project" value="UniProtKB"/>
</dbReference>
<dbReference type="GO" id="GO:0046872">
    <property type="term" value="F:metal ion binding"/>
    <property type="evidence" value="ECO:0007669"/>
    <property type="project" value="UniProtKB-KW"/>
</dbReference>
<dbReference type="GO" id="GO:0050146">
    <property type="term" value="F:nucleoside phosphotransferase activity"/>
    <property type="evidence" value="ECO:0000314"/>
    <property type="project" value="UniProtKB"/>
</dbReference>
<dbReference type="GO" id="GO:0106411">
    <property type="term" value="F:XMP 5'-nucleosidase activity"/>
    <property type="evidence" value="ECO:0007669"/>
    <property type="project" value="RHEA"/>
</dbReference>
<dbReference type="GO" id="GO:0046085">
    <property type="term" value="P:adenosine metabolic process"/>
    <property type="evidence" value="ECO:0000318"/>
    <property type="project" value="GO_Central"/>
</dbReference>
<dbReference type="GO" id="GO:0046054">
    <property type="term" value="P:dGMP metabolic process"/>
    <property type="evidence" value="ECO:0000314"/>
    <property type="project" value="UniProtKB"/>
</dbReference>
<dbReference type="GO" id="GO:0046037">
    <property type="term" value="P:GMP metabolic process"/>
    <property type="evidence" value="ECO:0000314"/>
    <property type="project" value="UniProtKB"/>
</dbReference>
<dbReference type="GO" id="GO:0046040">
    <property type="term" value="P:IMP metabolic process"/>
    <property type="evidence" value="ECO:0000314"/>
    <property type="project" value="UniProtKB"/>
</dbReference>
<dbReference type="CDD" id="cd07522">
    <property type="entry name" value="HAD_cN-II"/>
    <property type="match status" value="1"/>
</dbReference>
<dbReference type="FunFam" id="3.40.50.1000:FF:000021">
    <property type="entry name" value="NT5C2 isoform 1"/>
    <property type="match status" value="1"/>
</dbReference>
<dbReference type="Gene3D" id="3.40.50.1000">
    <property type="entry name" value="HAD superfamily/HAD-like"/>
    <property type="match status" value="2"/>
</dbReference>
<dbReference type="InterPro" id="IPR036412">
    <property type="entry name" value="HAD-like_sf"/>
</dbReference>
<dbReference type="InterPro" id="IPR008380">
    <property type="entry name" value="HAD-SF_hydro_IG_5-nucl"/>
</dbReference>
<dbReference type="InterPro" id="IPR023214">
    <property type="entry name" value="HAD_sf"/>
</dbReference>
<dbReference type="InterPro" id="IPR016695">
    <property type="entry name" value="Pur_nucleotidase"/>
</dbReference>
<dbReference type="NCBIfam" id="TIGR02244">
    <property type="entry name" value="HAD-IG-Ncltidse"/>
    <property type="match status" value="1"/>
</dbReference>
<dbReference type="PANTHER" id="PTHR12103">
    <property type="entry name" value="5'-NUCLEOTIDASE DOMAIN-CONTAINING"/>
    <property type="match status" value="1"/>
</dbReference>
<dbReference type="PANTHER" id="PTHR12103:SF17">
    <property type="entry name" value="CYTOSOLIC PURINE 5'-NUCLEOTIDASE"/>
    <property type="match status" value="1"/>
</dbReference>
<dbReference type="Pfam" id="PF05761">
    <property type="entry name" value="5_nucleotid"/>
    <property type="match status" value="1"/>
</dbReference>
<dbReference type="PIRSF" id="PIRSF017434">
    <property type="entry name" value="Purine_5'-nucleotidase"/>
    <property type="match status" value="1"/>
</dbReference>
<dbReference type="SUPFAM" id="SSF56784">
    <property type="entry name" value="HAD-like"/>
    <property type="match status" value="1"/>
</dbReference>
<feature type="chain" id="PRO_0000310263" description="Cytosolic purine 5'-nucleotidase">
    <location>
        <begin position="1"/>
        <end position="560"/>
    </location>
</feature>
<feature type="region of interest" description="Disordered" evidence="4">
    <location>
        <begin position="541"/>
        <end position="560"/>
    </location>
</feature>
<feature type="region of interest" description="Required for tetramer assembly" evidence="2">
    <location>
        <begin position="548"/>
        <end position="560"/>
    </location>
</feature>
<feature type="compositionally biased region" description="Acidic residues" evidence="4">
    <location>
        <begin position="550"/>
        <end position="560"/>
    </location>
</feature>
<feature type="active site" description="Nucleophile" evidence="2">
    <location>
        <position position="52"/>
    </location>
</feature>
<feature type="active site" description="Proton donor" evidence="2">
    <location>
        <position position="54"/>
    </location>
</feature>
<feature type="binding site" evidence="2">
    <location>
        <position position="52"/>
    </location>
    <ligand>
        <name>IMP</name>
        <dbReference type="ChEBI" id="CHEBI:58053"/>
    </ligand>
</feature>
<feature type="binding site" evidence="2">
    <location>
        <position position="52"/>
    </location>
    <ligand>
        <name>Mg(2+)</name>
        <dbReference type="ChEBI" id="CHEBI:18420"/>
    </ligand>
</feature>
<feature type="binding site" evidence="2">
    <location>
        <position position="54"/>
    </location>
    <ligand>
        <name>IMP</name>
        <dbReference type="ChEBI" id="CHEBI:58053"/>
    </ligand>
</feature>
<feature type="binding site" evidence="2">
    <location>
        <position position="54"/>
    </location>
    <ligand>
        <name>Mg(2+)</name>
        <dbReference type="ChEBI" id="CHEBI:18420"/>
    </ligand>
</feature>
<feature type="binding site" evidence="2">
    <location>
        <position position="144"/>
    </location>
    <ligand>
        <name>ATP</name>
        <dbReference type="ChEBI" id="CHEBI:30616"/>
        <note>allosteric activator</note>
    </ligand>
</feature>
<feature type="binding site" evidence="2">
    <location>
        <position position="154"/>
    </location>
    <ligand>
        <name>ATP</name>
        <dbReference type="ChEBI" id="CHEBI:30616"/>
        <note>allosteric activator</note>
    </ligand>
</feature>
<feature type="binding site" evidence="2">
    <location>
        <position position="202"/>
    </location>
    <ligand>
        <name>IMP</name>
        <dbReference type="ChEBI" id="CHEBI:58053"/>
    </ligand>
</feature>
<feature type="binding site" evidence="2">
    <location>
        <position position="206"/>
    </location>
    <ligand>
        <name>IMP</name>
        <dbReference type="ChEBI" id="CHEBI:58053"/>
    </ligand>
</feature>
<feature type="binding site" evidence="2">
    <location>
        <position position="215"/>
    </location>
    <ligand>
        <name>IMP</name>
        <dbReference type="ChEBI" id="CHEBI:58053"/>
    </ligand>
</feature>
<feature type="binding site" evidence="2">
    <location>
        <position position="249"/>
    </location>
    <ligand>
        <name>IMP</name>
        <dbReference type="ChEBI" id="CHEBI:58053"/>
    </ligand>
</feature>
<feature type="binding site" evidence="2">
    <location>
        <position position="250"/>
    </location>
    <ligand>
        <name>IMP</name>
        <dbReference type="ChEBI" id="CHEBI:58053"/>
    </ligand>
</feature>
<feature type="binding site" evidence="2">
    <location>
        <position position="251"/>
    </location>
    <ligand>
        <name>IMP</name>
        <dbReference type="ChEBI" id="CHEBI:58053"/>
    </ligand>
</feature>
<feature type="binding site" evidence="2">
    <location>
        <position position="292"/>
    </location>
    <ligand>
        <name>IMP</name>
        <dbReference type="ChEBI" id="CHEBI:58053"/>
    </ligand>
</feature>
<feature type="binding site" evidence="2">
    <location>
        <position position="351"/>
    </location>
    <ligand>
        <name>Mg(2+)</name>
        <dbReference type="ChEBI" id="CHEBI:18420"/>
    </ligand>
</feature>
<feature type="binding site" evidence="2">
    <location>
        <position position="453"/>
    </location>
    <ligand>
        <name>ATP</name>
        <dbReference type="ChEBI" id="CHEBI:30616"/>
        <note>allosteric activator</note>
    </ligand>
</feature>
<feature type="binding site" evidence="2">
    <location>
        <position position="456"/>
    </location>
    <ligand>
        <name>ATP</name>
        <dbReference type="ChEBI" id="CHEBI:30616"/>
        <note>allosteric activator</note>
    </ligand>
</feature>
<feature type="modified residue" description="Phosphoserine" evidence="2">
    <location>
        <position position="418"/>
    </location>
</feature>
<feature type="modified residue" description="Phosphoserine" evidence="2">
    <location>
        <position position="502"/>
    </location>
</feature>
<feature type="modified residue" description="Phosphoserine" evidence="2">
    <location>
        <position position="511"/>
    </location>
</feature>
<feature type="modified residue" description="Phosphoserine" evidence="3">
    <location>
        <position position="527"/>
    </location>
</feature>
<comment type="function">
    <text evidence="5 6">Broad specificity cytosolic 5'-nucleotidase that catalyzes the dephosphorylation of 6-hydroxypurine nucleoside 5'-monophosphates (PubMed:8031149, PubMed:9371705). In addition, possesses a phosphotransferase activity by which it can transfer a phosphate from a donor nucleoside monophosphate to an acceptor nucleoside, preferably inosine, deoxyinosine and guanosine (PubMed:8031149, PubMed:9371705). Has the highest activities for IMP and GMP followed by dIMP, dGMP and XMP (PubMed:8031149, PubMed:9371705). Could also catalyze the transfer of phosphates from pyrimidine monophosphates but with lower efficiency (PubMed:8031149, PubMed:9371705). Through these activities regulates the purine nucleoside/nucleotide pools within the cell (PubMed:8031149, PubMed:9371705).</text>
</comment>
<comment type="catalytic activity">
    <reaction evidence="5 6">
        <text>a ribonucleoside 5'-phosphate + H2O = a ribonucleoside + phosphate</text>
        <dbReference type="Rhea" id="RHEA:12484"/>
        <dbReference type="ChEBI" id="CHEBI:15377"/>
        <dbReference type="ChEBI" id="CHEBI:18254"/>
        <dbReference type="ChEBI" id="CHEBI:43474"/>
        <dbReference type="ChEBI" id="CHEBI:58043"/>
        <dbReference type="EC" id="3.1.3.5"/>
    </reaction>
    <physiologicalReaction direction="left-to-right" evidence="9">
        <dbReference type="Rhea" id="RHEA:12485"/>
    </physiologicalReaction>
</comment>
<comment type="catalytic activity">
    <reaction evidence="5 6">
        <text>a 2'-deoxyribonucleoside + a ribonucleoside 5'-phosphate = a ribonucleoside + a 2'-deoxyribonucleoside 5'-phosphate</text>
        <dbReference type="Rhea" id="RHEA:19961"/>
        <dbReference type="ChEBI" id="CHEBI:18254"/>
        <dbReference type="ChEBI" id="CHEBI:18274"/>
        <dbReference type="ChEBI" id="CHEBI:58043"/>
        <dbReference type="ChEBI" id="CHEBI:65317"/>
        <dbReference type="EC" id="2.7.1.77"/>
    </reaction>
</comment>
<comment type="catalytic activity">
    <reaction evidence="5 6">
        <text>IMP + H2O = inosine + phosphate</text>
        <dbReference type="Rhea" id="RHEA:27718"/>
        <dbReference type="ChEBI" id="CHEBI:15377"/>
        <dbReference type="ChEBI" id="CHEBI:17596"/>
        <dbReference type="ChEBI" id="CHEBI:43474"/>
        <dbReference type="ChEBI" id="CHEBI:58053"/>
        <dbReference type="EC" id="3.1.3.99"/>
    </reaction>
    <physiologicalReaction direction="left-to-right" evidence="9">
        <dbReference type="Rhea" id="RHEA:27719"/>
    </physiologicalReaction>
</comment>
<comment type="catalytic activity">
    <reaction evidence="1">
        <text>GMP + H2O = guanosine + phosphate</text>
        <dbReference type="Rhea" id="RHEA:27714"/>
        <dbReference type="ChEBI" id="CHEBI:15377"/>
        <dbReference type="ChEBI" id="CHEBI:16750"/>
        <dbReference type="ChEBI" id="CHEBI:43474"/>
        <dbReference type="ChEBI" id="CHEBI:58115"/>
    </reaction>
    <physiologicalReaction direction="left-to-right" evidence="1">
        <dbReference type="Rhea" id="RHEA:27715"/>
    </physiologicalReaction>
</comment>
<comment type="catalytic activity">
    <reaction evidence="1">
        <text>dIMP + H2O = 2'-deoxyinosine + phosphate</text>
        <dbReference type="Rhea" id="RHEA:29383"/>
        <dbReference type="ChEBI" id="CHEBI:15377"/>
        <dbReference type="ChEBI" id="CHEBI:28997"/>
        <dbReference type="ChEBI" id="CHEBI:43474"/>
        <dbReference type="ChEBI" id="CHEBI:61194"/>
    </reaction>
    <physiologicalReaction direction="left-to-right" evidence="1">
        <dbReference type="Rhea" id="RHEA:29384"/>
    </physiologicalReaction>
</comment>
<comment type="catalytic activity">
    <reaction evidence="1">
        <text>dGMP + H2O = 2'-deoxyguanosine + phosphate</text>
        <dbReference type="Rhea" id="RHEA:29379"/>
        <dbReference type="ChEBI" id="CHEBI:15377"/>
        <dbReference type="ChEBI" id="CHEBI:17172"/>
        <dbReference type="ChEBI" id="CHEBI:43474"/>
        <dbReference type="ChEBI" id="CHEBI:57673"/>
    </reaction>
    <physiologicalReaction direction="left-to-right" evidence="1">
        <dbReference type="Rhea" id="RHEA:29380"/>
    </physiologicalReaction>
</comment>
<comment type="catalytic activity">
    <reaction evidence="1">
        <text>XMP + H2O = xanthosine + phosphate</text>
        <dbReference type="Rhea" id="RHEA:28530"/>
        <dbReference type="ChEBI" id="CHEBI:15377"/>
        <dbReference type="ChEBI" id="CHEBI:18107"/>
        <dbReference type="ChEBI" id="CHEBI:43474"/>
        <dbReference type="ChEBI" id="CHEBI:57464"/>
    </reaction>
    <physiologicalReaction direction="left-to-right" evidence="1">
        <dbReference type="Rhea" id="RHEA:28531"/>
    </physiologicalReaction>
</comment>
<comment type="catalytic activity">
    <reaction evidence="5 6">
        <text>inosine + GMP = guanosine + IMP</text>
        <dbReference type="Rhea" id="RHEA:69584"/>
        <dbReference type="ChEBI" id="CHEBI:16750"/>
        <dbReference type="ChEBI" id="CHEBI:17596"/>
        <dbReference type="ChEBI" id="CHEBI:58053"/>
        <dbReference type="ChEBI" id="CHEBI:58115"/>
    </reaction>
</comment>
<comment type="catalytic activity">
    <reaction evidence="5 6">
        <text>dGMP + inosine = 2'-deoxyguanosine + IMP</text>
        <dbReference type="Rhea" id="RHEA:69580"/>
        <dbReference type="ChEBI" id="CHEBI:17172"/>
        <dbReference type="ChEBI" id="CHEBI:17596"/>
        <dbReference type="ChEBI" id="CHEBI:57673"/>
        <dbReference type="ChEBI" id="CHEBI:58053"/>
    </reaction>
</comment>
<comment type="catalytic activity">
    <reaction evidence="5 6">
        <text>dIMP + inosine = 2'-deoxyinosine + IMP</text>
        <dbReference type="Rhea" id="RHEA:69572"/>
        <dbReference type="ChEBI" id="CHEBI:17596"/>
        <dbReference type="ChEBI" id="CHEBI:28997"/>
        <dbReference type="ChEBI" id="CHEBI:58053"/>
        <dbReference type="ChEBI" id="CHEBI:61194"/>
    </reaction>
</comment>
<comment type="catalytic activity">
    <reaction evidence="5 6">
        <text>inosine + UMP = uridine + IMP</text>
        <dbReference type="Rhea" id="RHEA:69588"/>
        <dbReference type="ChEBI" id="CHEBI:16704"/>
        <dbReference type="ChEBI" id="CHEBI:17596"/>
        <dbReference type="ChEBI" id="CHEBI:57865"/>
        <dbReference type="ChEBI" id="CHEBI:58053"/>
    </reaction>
</comment>
<comment type="catalytic activity">
    <reaction evidence="5 6">
        <text>inosine + CMP = cytidine + IMP</text>
        <dbReference type="Rhea" id="RHEA:69592"/>
        <dbReference type="ChEBI" id="CHEBI:17562"/>
        <dbReference type="ChEBI" id="CHEBI:17596"/>
        <dbReference type="ChEBI" id="CHEBI:58053"/>
        <dbReference type="ChEBI" id="CHEBI:60377"/>
    </reaction>
</comment>
<comment type="catalytic activity">
    <reaction evidence="5 6">
        <text>inosine + AMP = IMP + adenosine</text>
        <dbReference type="Rhea" id="RHEA:69596"/>
        <dbReference type="ChEBI" id="CHEBI:16335"/>
        <dbReference type="ChEBI" id="CHEBI:17596"/>
        <dbReference type="ChEBI" id="CHEBI:58053"/>
        <dbReference type="ChEBI" id="CHEBI:456215"/>
    </reaction>
</comment>
<comment type="cofactor">
    <cofactor evidence="5">
        <name>Mg(2+)</name>
        <dbReference type="ChEBI" id="CHEBI:18420"/>
    </cofactor>
    <text evidence="2">Binds 1 Mg(2+) ion per subunit.</text>
</comment>
<comment type="activity regulation">
    <text evidence="2 5 6">Allosterically activated by various compounds including ATP, 2,3-BPG/2,3-Bisphosphoglyceric acid and Ap4A/P1,P4-bis(5'-adenosyl) tetraphosphate (PubMed:8031149, PubMed:9371705). Binding of an allosteric activator is a prerequisiste to magnesium and substrate binding (By similarity). Inhibited by inorganic phosphate (By similarity).</text>
</comment>
<comment type="biophysicochemical properties">
    <kinetics>
        <KM evidence="5">0.09 mM for IMP (in absence of allosteric activator)</KM>
        <KM evidence="5">0.09 mM for IMP (in the presence of 4.5 mM ATP)</KM>
        <Vmax evidence="5">12.5 umol/min/mg enzyme for the hydrolysis of IMP (in the presence of 4.5 mM ATP)</Vmax>
        <Vmax evidence="5">1.48 umol/min/mg enzyme for the hydrolysis of IMP (in absence of the allosteric activator ATP)</Vmax>
    </kinetics>
</comment>
<comment type="subunit">
    <text evidence="5">Homotetramer.</text>
</comment>
<comment type="interaction">
    <interactant intactId="EBI-8487999">
        <id>O46411</id>
    </interactant>
    <interactant intactId="EBI-8487999">
        <id>O46411</id>
        <label>NT5C2</label>
    </interactant>
    <organismsDiffer>false</organismsDiffer>
    <experiments>3</experiments>
</comment>
<comment type="subcellular location">
    <subcellularLocation>
        <location evidence="5 6">Cytoplasm</location>
        <location evidence="5 6">Cytosol</location>
    </subcellularLocation>
</comment>
<comment type="similarity">
    <text evidence="8">Belongs to the 5'(3')-deoxyribonucleotidase family.</text>
</comment>
<reference key="1">
    <citation type="journal article" date="1997" name="Biochem. J.">
        <title>Bovine cytosolic IMP/GMP-specific 5'-nucleotidase: cloning and expression of active enzyme in Escherichia coli.</title>
        <authorList>
            <person name="Allegrini S."/>
            <person name="Pesi R."/>
            <person name="Tozzi M.G."/>
            <person name="Fiol C.J."/>
            <person name="Johnson R.B."/>
            <person name="Eriksson S."/>
        </authorList>
    </citation>
    <scope>NUCLEOTIDE SEQUENCE [MRNA]</scope>
    <scope>FUNCTION</scope>
    <scope>CATALYTIC ACTIVITY</scope>
    <scope>ACTIVITY REGULATION</scope>
    <scope>SUBCELLULAR LOCATION</scope>
    <source>
        <tissue>Thymus</tissue>
    </source>
</reference>
<reference key="2">
    <citation type="journal article" date="1994" name="Arch. Biochem. Biophys.">
        <title>The bifunctional cytosolic 5'-nucleotidase: regulation of the phosphotransferase and nucleotidase activities.</title>
        <authorList>
            <person name="Pesi R."/>
            <person name="Turriani M."/>
            <person name="Allegrini S."/>
            <person name="Scolozzi C."/>
            <person name="Camici M."/>
            <person name="Ipata P.L."/>
            <person name="Tozzi M.G."/>
        </authorList>
    </citation>
    <scope>IDENTIFICATION</scope>
    <scope>FUNCTION</scope>
    <scope>CATALYTIC ACTIVITY</scope>
    <scope>COFACTOR</scope>
    <scope>BIOPHYSICOCHEMICAL PROPERTIES</scope>
    <scope>ACTIVITY REGULATION</scope>
    <scope>SUBUNIT</scope>
    <scope>SUBCELLULAR LOCATION</scope>
</reference>